<feature type="chain" id="PRO_0000104181" description="Protein translocase subunit SecE">
    <location>
        <begin position="1"/>
        <end position="60"/>
    </location>
</feature>
<feature type="transmembrane region" description="Helical" evidence="1">
    <location>
        <begin position="31"/>
        <end position="51"/>
    </location>
</feature>
<protein>
    <recommendedName>
        <fullName evidence="1">Protein translocase subunit SecE</fullName>
    </recommendedName>
</protein>
<evidence type="ECO:0000255" key="1">
    <source>
        <dbReference type="HAMAP-Rule" id="MF_00422"/>
    </source>
</evidence>
<sequence length="60" mass="6973">MAKKESFFKGVKSEMEKTSWPTKEELFKYTIIVVSTVIFFLVFFYALDIGINALKQLFLG</sequence>
<keyword id="KW-1003">Cell membrane</keyword>
<keyword id="KW-0472">Membrane</keyword>
<keyword id="KW-0653">Protein transport</keyword>
<keyword id="KW-0811">Translocation</keyword>
<keyword id="KW-0812">Transmembrane</keyword>
<keyword id="KW-1133">Transmembrane helix</keyword>
<keyword id="KW-0813">Transport</keyword>
<gene>
    <name evidence="1" type="primary">secE</name>
    <name type="ordered locus">SE_0298</name>
</gene>
<name>SECE_STAES</name>
<comment type="function">
    <text evidence="1">Essential subunit of the Sec protein translocation channel SecYEG. Clamps together the 2 halves of SecY. May contact the channel plug during translocation.</text>
</comment>
<comment type="subunit">
    <text evidence="1">Component of the Sec protein translocase complex. Heterotrimer consisting of SecY, SecE and SecG subunits. The heterotrimers can form oligomers, although 1 heterotrimer is thought to be able to translocate proteins. Interacts with the ribosome. Interacts with SecDF, and other proteins may be involved. Interacts with SecA.</text>
</comment>
<comment type="subcellular location">
    <subcellularLocation>
        <location evidence="1">Cell membrane</location>
        <topology evidence="1">Single-pass membrane protein</topology>
    </subcellularLocation>
</comment>
<comment type="similarity">
    <text evidence="1">Belongs to the SecE/SEC61-gamma family.</text>
</comment>
<reference key="1">
    <citation type="journal article" date="2003" name="Mol. Microbiol.">
        <title>Genome-based analysis of virulence genes in a non-biofilm-forming Staphylococcus epidermidis strain (ATCC 12228).</title>
        <authorList>
            <person name="Zhang Y.-Q."/>
            <person name="Ren S.-X."/>
            <person name="Li H.-L."/>
            <person name="Wang Y.-X."/>
            <person name="Fu G."/>
            <person name="Yang J."/>
            <person name="Qin Z.-Q."/>
            <person name="Miao Y.-G."/>
            <person name="Wang W.-Y."/>
            <person name="Chen R.-S."/>
            <person name="Shen Y."/>
            <person name="Chen Z."/>
            <person name="Yuan Z.-H."/>
            <person name="Zhao G.-P."/>
            <person name="Qu D."/>
            <person name="Danchin A."/>
            <person name="Wen Y.-M."/>
        </authorList>
    </citation>
    <scope>NUCLEOTIDE SEQUENCE [LARGE SCALE GENOMIC DNA]</scope>
    <source>
        <strain>ATCC 12228 / FDA PCI 1200</strain>
    </source>
</reference>
<accession>Q8CQ86</accession>
<proteinExistence type="inferred from homology"/>
<organism>
    <name type="scientific">Staphylococcus epidermidis (strain ATCC 12228 / FDA PCI 1200)</name>
    <dbReference type="NCBI Taxonomy" id="176280"/>
    <lineage>
        <taxon>Bacteria</taxon>
        <taxon>Bacillati</taxon>
        <taxon>Bacillota</taxon>
        <taxon>Bacilli</taxon>
        <taxon>Bacillales</taxon>
        <taxon>Staphylococcaceae</taxon>
        <taxon>Staphylococcus</taxon>
    </lineage>
</organism>
<dbReference type="EMBL" id="AE015929">
    <property type="protein sequence ID" value="AAO03895.1"/>
    <property type="molecule type" value="Genomic_DNA"/>
</dbReference>
<dbReference type="RefSeq" id="NP_763853.1">
    <property type="nucleotide sequence ID" value="NC_004461.1"/>
</dbReference>
<dbReference type="RefSeq" id="WP_002438679.1">
    <property type="nucleotide sequence ID" value="NZ_WBME01000014.1"/>
</dbReference>
<dbReference type="SMR" id="Q8CQ86"/>
<dbReference type="GeneID" id="50019536"/>
<dbReference type="KEGG" id="sep:SE_0298"/>
<dbReference type="PATRIC" id="fig|176280.10.peg.274"/>
<dbReference type="eggNOG" id="COG0690">
    <property type="taxonomic scope" value="Bacteria"/>
</dbReference>
<dbReference type="HOGENOM" id="CLU_113663_8_2_9"/>
<dbReference type="OrthoDB" id="9813233at2"/>
<dbReference type="Proteomes" id="UP000001411">
    <property type="component" value="Chromosome"/>
</dbReference>
<dbReference type="GO" id="GO:0005886">
    <property type="term" value="C:plasma membrane"/>
    <property type="evidence" value="ECO:0007669"/>
    <property type="project" value="UniProtKB-SubCell"/>
</dbReference>
<dbReference type="GO" id="GO:0008320">
    <property type="term" value="F:protein transmembrane transporter activity"/>
    <property type="evidence" value="ECO:0007669"/>
    <property type="project" value="UniProtKB-UniRule"/>
</dbReference>
<dbReference type="GO" id="GO:0065002">
    <property type="term" value="P:intracellular protein transmembrane transport"/>
    <property type="evidence" value="ECO:0007669"/>
    <property type="project" value="UniProtKB-UniRule"/>
</dbReference>
<dbReference type="GO" id="GO:0009306">
    <property type="term" value="P:protein secretion"/>
    <property type="evidence" value="ECO:0007669"/>
    <property type="project" value="UniProtKB-UniRule"/>
</dbReference>
<dbReference type="GO" id="GO:0006605">
    <property type="term" value="P:protein targeting"/>
    <property type="evidence" value="ECO:0007669"/>
    <property type="project" value="UniProtKB-UniRule"/>
</dbReference>
<dbReference type="GO" id="GO:0043952">
    <property type="term" value="P:protein transport by the Sec complex"/>
    <property type="evidence" value="ECO:0007669"/>
    <property type="project" value="UniProtKB-UniRule"/>
</dbReference>
<dbReference type="Gene3D" id="1.20.5.1030">
    <property type="entry name" value="Preprotein translocase secy subunit"/>
    <property type="match status" value="1"/>
</dbReference>
<dbReference type="HAMAP" id="MF_00422">
    <property type="entry name" value="SecE"/>
    <property type="match status" value="1"/>
</dbReference>
<dbReference type="InterPro" id="IPR005807">
    <property type="entry name" value="SecE_bac"/>
</dbReference>
<dbReference type="InterPro" id="IPR038379">
    <property type="entry name" value="SecE_sf"/>
</dbReference>
<dbReference type="InterPro" id="IPR001901">
    <property type="entry name" value="Translocase_SecE/Sec61-g"/>
</dbReference>
<dbReference type="NCBIfam" id="TIGR00964">
    <property type="entry name" value="secE_bact"/>
    <property type="match status" value="1"/>
</dbReference>
<dbReference type="PANTHER" id="PTHR33910">
    <property type="entry name" value="PROTEIN TRANSLOCASE SUBUNIT SECE"/>
    <property type="match status" value="1"/>
</dbReference>
<dbReference type="PANTHER" id="PTHR33910:SF1">
    <property type="entry name" value="PROTEIN TRANSLOCASE SUBUNIT SECE"/>
    <property type="match status" value="1"/>
</dbReference>
<dbReference type="Pfam" id="PF00584">
    <property type="entry name" value="SecE"/>
    <property type="match status" value="1"/>
</dbReference>
<dbReference type="PROSITE" id="PS01067">
    <property type="entry name" value="SECE_SEC61G"/>
    <property type="match status" value="1"/>
</dbReference>